<organism>
    <name type="scientific">Clostridium sporogenes (strain ATCC 15579)</name>
    <dbReference type="NCBI Taxonomy" id="471871"/>
    <lineage>
        <taxon>Bacteria</taxon>
        <taxon>Bacillati</taxon>
        <taxon>Bacillota</taxon>
        <taxon>Clostridia</taxon>
        <taxon>Eubacteriales</taxon>
        <taxon>Clostridiaceae</taxon>
        <taxon>Clostridium</taxon>
    </lineage>
</organism>
<protein>
    <recommendedName>
        <fullName evidence="2">Exosporium protein C</fullName>
    </recommendedName>
</protein>
<accession>J7SGD5</accession>
<comment type="subcellular location">
    <subcellularLocation>
        <location evidence="1">Spore wall</location>
    </subcellularLocation>
    <text evidence="1">Localizes to the exosporium.</text>
</comment>
<feature type="chain" id="PRO_0000441672" description="Exosporium protein C">
    <location>
        <begin position="1"/>
        <end position="273"/>
    </location>
</feature>
<sequence length="273" mass="30773">MMSMDEMRGNYDSNSYKSADHDCHKDCGRVIESQTLPLCEGTNITPTAVTTPVVAKIPVVLAEKEVQIDVEARMKLKEKFFEIKRIKKDVFLTQCELLPRAGVIENGVPITGKLFLSGFVRKNIEFATADCVKHDVVSGEIKHTTEKIPFTCVTEVTYITPPILGNRGIQQKTDLFCGRCDCECECEEERLGKLTCEEFLEDSITLVEKPFCELLGARIFEADIQRKPCYEHGEKVFDELLEKMVVHIRVKVLQLQQVAVNDTDAGTGSMCRK</sequence>
<proteinExistence type="evidence at protein level"/>
<dbReference type="EMBL" id="ABKW02000004">
    <property type="protein sequence ID" value="EDU37596.1"/>
    <property type="molecule type" value="Genomic_DNA"/>
</dbReference>
<dbReference type="RefSeq" id="WP_003487073.1">
    <property type="nucleotide sequence ID" value="NZ_DS981517.1"/>
</dbReference>
<dbReference type="HOGENOM" id="CLU_070018_2_0_9"/>
<dbReference type="GO" id="GO:0043592">
    <property type="term" value="C:exosporium"/>
    <property type="evidence" value="ECO:0000314"/>
    <property type="project" value="UniProtKB"/>
</dbReference>
<dbReference type="InterPro" id="IPR039286">
    <property type="entry name" value="CsxC"/>
</dbReference>
<dbReference type="InterPro" id="IPR057174">
    <property type="entry name" value="DUF7852"/>
</dbReference>
<dbReference type="InterPro" id="IPR054845">
    <property type="entry name" value="Exosporium_prot_C"/>
</dbReference>
<dbReference type="NCBIfam" id="NF045794">
    <property type="entry name" value="CsxC_fam"/>
    <property type="match status" value="1"/>
</dbReference>
<dbReference type="PANTHER" id="PTHR37303:SF2">
    <property type="entry name" value="DUF3794 DOMAIN-CONTAINING PROTEIN"/>
    <property type="match status" value="1"/>
</dbReference>
<dbReference type="PANTHER" id="PTHR37303">
    <property type="entry name" value="EXPORTED PROTEIN-RELATED"/>
    <property type="match status" value="1"/>
</dbReference>
<dbReference type="Pfam" id="PF25250">
    <property type="entry name" value="DUF7852"/>
    <property type="match status" value="1"/>
</dbReference>
<name>CSXC_CLOS1</name>
<evidence type="ECO:0000269" key="1">
    <source>
    </source>
</evidence>
<evidence type="ECO:0000303" key="2">
    <source>
    </source>
</evidence>
<evidence type="ECO:0000312" key="3">
    <source>
        <dbReference type="EMBL" id="EDU37596.1"/>
    </source>
</evidence>
<gene>
    <name evidence="2" type="primary">csxC</name>
    <name evidence="3" type="ORF">CLOSPO_03765</name>
</gene>
<reference key="1">
    <citation type="submission" date="2008-05" db="EMBL/GenBank/DDBJ databases">
        <title>Draft genome sequence of Clostridium sporogenes ATCC 15579.</title>
        <authorList>
            <person name="Sudarsanam P."/>
            <person name="Ley R."/>
            <person name="Guruge J."/>
            <person name="Turnbaugh P.J."/>
            <person name="Mahowald M."/>
            <person name="Liep D."/>
            <person name="Gordon J."/>
            <person name="Fulton L."/>
            <person name="Clifton S."/>
            <person name="Fulton B."/>
            <person name="Xu J."/>
            <person name="Minx P."/>
            <person name="Pepin K.H."/>
            <person name="Johnson M."/>
            <person name="Thiruvilangam P."/>
            <person name="Bhonagiri V."/>
            <person name="Nash W.E."/>
            <person name="Mardis E.R."/>
            <person name="Wilson R.K."/>
        </authorList>
    </citation>
    <scope>NUCLEOTIDE SEQUENCE [LARGE SCALE GENOMIC DNA]</scope>
    <source>
        <strain>ATCC 15579</strain>
    </source>
</reference>
<reference key="2">
    <citation type="journal article" date="2016" name="Food Microbiol.">
        <title>Characterization of the spore surface and exosporium proteins of Clostridium sporogenes; implications for Clostridium botulinum group I strains.</title>
        <authorList>
            <person name="Janganan T.K."/>
            <person name="Mullin N."/>
            <person name="Tzokov S.B."/>
            <person name="Stringer S."/>
            <person name="Fagan R.P."/>
            <person name="Hobbs J.K."/>
            <person name="Moir A."/>
            <person name="Bullough P.A."/>
        </authorList>
    </citation>
    <scope>IDENTIFICATION BY MASS SPECTROMETRY</scope>
    <scope>SUBCELLULAR LOCATION</scope>
    <source>
        <strain>NCIMB 701792</strain>
    </source>
</reference>